<comment type="function">
    <text evidence="1">One of the primary rRNA binding proteins. Required for association of the 30S and 50S subunits to form the 70S ribosome, for tRNA binding and peptide bond formation. It has been suggested to have peptidyltransferase activity; this is somewhat controversial. Makes several contacts with the 16S rRNA in the 70S ribosome.</text>
</comment>
<comment type="subunit">
    <text evidence="1">Part of the 50S ribosomal subunit. Forms a bridge to the 30S subunit in the 70S ribosome.</text>
</comment>
<comment type="similarity">
    <text evidence="1">Belongs to the universal ribosomal protein uL2 family.</text>
</comment>
<keyword id="KW-1185">Reference proteome</keyword>
<keyword id="KW-0687">Ribonucleoprotein</keyword>
<keyword id="KW-0689">Ribosomal protein</keyword>
<keyword id="KW-0694">RNA-binding</keyword>
<keyword id="KW-0699">rRNA-binding</keyword>
<name>RL2_STRCO</name>
<gene>
    <name evidence="1" type="primary">rplB</name>
    <name type="ordered locus">SCO4705</name>
    <name type="ORF">SCD31.30</name>
</gene>
<evidence type="ECO:0000255" key="1">
    <source>
        <dbReference type="HAMAP-Rule" id="MF_01320"/>
    </source>
</evidence>
<evidence type="ECO:0000256" key="2">
    <source>
        <dbReference type="SAM" id="MobiDB-lite"/>
    </source>
</evidence>
<evidence type="ECO:0000305" key="3"/>
<reference key="1">
    <citation type="journal article" date="2002" name="Nature">
        <title>Complete genome sequence of the model actinomycete Streptomyces coelicolor A3(2).</title>
        <authorList>
            <person name="Bentley S.D."/>
            <person name="Chater K.F."/>
            <person name="Cerdeno-Tarraga A.-M."/>
            <person name="Challis G.L."/>
            <person name="Thomson N.R."/>
            <person name="James K.D."/>
            <person name="Harris D.E."/>
            <person name="Quail M.A."/>
            <person name="Kieser H."/>
            <person name="Harper D."/>
            <person name="Bateman A."/>
            <person name="Brown S."/>
            <person name="Chandra G."/>
            <person name="Chen C.W."/>
            <person name="Collins M."/>
            <person name="Cronin A."/>
            <person name="Fraser A."/>
            <person name="Goble A."/>
            <person name="Hidalgo J."/>
            <person name="Hornsby T."/>
            <person name="Howarth S."/>
            <person name="Huang C.-H."/>
            <person name="Kieser T."/>
            <person name="Larke L."/>
            <person name="Murphy L.D."/>
            <person name="Oliver K."/>
            <person name="O'Neil S."/>
            <person name="Rabbinowitsch E."/>
            <person name="Rajandream M.A."/>
            <person name="Rutherford K.M."/>
            <person name="Rutter S."/>
            <person name="Seeger K."/>
            <person name="Saunders D."/>
            <person name="Sharp S."/>
            <person name="Squares R."/>
            <person name="Squares S."/>
            <person name="Taylor K."/>
            <person name="Warren T."/>
            <person name="Wietzorrek A."/>
            <person name="Woodward J.R."/>
            <person name="Barrell B.G."/>
            <person name="Parkhill J."/>
            <person name="Hopwood D.A."/>
        </authorList>
    </citation>
    <scope>NUCLEOTIDE SEQUENCE [LARGE SCALE GENOMIC DNA]</scope>
    <source>
        <strain>ATCC BAA-471 / A3(2) / M145</strain>
    </source>
</reference>
<feature type="chain" id="PRO_0000129625" description="Large ribosomal subunit protein uL2">
    <location>
        <begin position="1"/>
        <end position="278"/>
    </location>
</feature>
<feature type="region of interest" description="Disordered" evidence="2">
    <location>
        <begin position="26"/>
        <end position="57"/>
    </location>
</feature>
<feature type="region of interest" description="Disordered" evidence="2">
    <location>
        <begin position="225"/>
        <end position="278"/>
    </location>
</feature>
<feature type="compositionally biased region" description="Basic residues" evidence="2">
    <location>
        <begin position="258"/>
        <end position="278"/>
    </location>
</feature>
<dbReference type="EMBL" id="AL939121">
    <property type="protein sequence ID" value="CAB82073.1"/>
    <property type="molecule type" value="Genomic_DNA"/>
</dbReference>
<dbReference type="RefSeq" id="NP_628864.1">
    <property type="nucleotide sequence ID" value="NC_003888.3"/>
</dbReference>
<dbReference type="RefSeq" id="WP_003974264.1">
    <property type="nucleotide sequence ID" value="NZ_VNID01000016.1"/>
</dbReference>
<dbReference type="SMR" id="Q9L0D7"/>
<dbReference type="FunCoup" id="Q9L0D7">
    <property type="interactions" value="385"/>
</dbReference>
<dbReference type="STRING" id="100226.gene:17762354"/>
<dbReference type="PaxDb" id="100226-SCO4705"/>
<dbReference type="GeneID" id="97358122"/>
<dbReference type="KEGG" id="sco:SCO4705"/>
<dbReference type="PATRIC" id="fig|100226.15.peg.4776"/>
<dbReference type="eggNOG" id="COG0090">
    <property type="taxonomic scope" value="Bacteria"/>
</dbReference>
<dbReference type="HOGENOM" id="CLU_036235_2_1_11"/>
<dbReference type="InParanoid" id="Q9L0D7"/>
<dbReference type="OrthoDB" id="9778722at2"/>
<dbReference type="PhylomeDB" id="Q9L0D7"/>
<dbReference type="Proteomes" id="UP000001973">
    <property type="component" value="Chromosome"/>
</dbReference>
<dbReference type="GO" id="GO:0015934">
    <property type="term" value="C:large ribosomal subunit"/>
    <property type="evidence" value="ECO:0000250"/>
    <property type="project" value="UniProtKB"/>
</dbReference>
<dbReference type="GO" id="GO:0003723">
    <property type="term" value="F:RNA binding"/>
    <property type="evidence" value="ECO:0000318"/>
    <property type="project" value="GO_Central"/>
</dbReference>
<dbReference type="GO" id="GO:0019843">
    <property type="term" value="F:rRNA binding"/>
    <property type="evidence" value="ECO:0007669"/>
    <property type="project" value="UniProtKB-UniRule"/>
</dbReference>
<dbReference type="GO" id="GO:0003735">
    <property type="term" value="F:structural constituent of ribosome"/>
    <property type="evidence" value="ECO:0000250"/>
    <property type="project" value="UniProtKB"/>
</dbReference>
<dbReference type="GO" id="GO:0016740">
    <property type="term" value="F:transferase activity"/>
    <property type="evidence" value="ECO:0007669"/>
    <property type="project" value="InterPro"/>
</dbReference>
<dbReference type="GO" id="GO:0002181">
    <property type="term" value="P:cytoplasmic translation"/>
    <property type="evidence" value="ECO:0000318"/>
    <property type="project" value="GO_Central"/>
</dbReference>
<dbReference type="GO" id="GO:0006412">
    <property type="term" value="P:translation"/>
    <property type="evidence" value="ECO:0000250"/>
    <property type="project" value="UniProtKB"/>
</dbReference>
<dbReference type="FunFam" id="2.30.30.30:FF:000001">
    <property type="entry name" value="50S ribosomal protein L2"/>
    <property type="match status" value="1"/>
</dbReference>
<dbReference type="FunFam" id="2.40.50.140:FF:000003">
    <property type="entry name" value="50S ribosomal protein L2"/>
    <property type="match status" value="1"/>
</dbReference>
<dbReference type="FunFam" id="4.10.950.10:FF:000001">
    <property type="entry name" value="50S ribosomal protein L2"/>
    <property type="match status" value="1"/>
</dbReference>
<dbReference type="Gene3D" id="2.30.30.30">
    <property type="match status" value="1"/>
</dbReference>
<dbReference type="Gene3D" id="2.40.50.140">
    <property type="entry name" value="Nucleic acid-binding proteins"/>
    <property type="match status" value="1"/>
</dbReference>
<dbReference type="Gene3D" id="4.10.950.10">
    <property type="entry name" value="Ribosomal protein L2, domain 3"/>
    <property type="match status" value="1"/>
</dbReference>
<dbReference type="HAMAP" id="MF_01320_B">
    <property type="entry name" value="Ribosomal_uL2_B"/>
    <property type="match status" value="1"/>
</dbReference>
<dbReference type="InterPro" id="IPR012340">
    <property type="entry name" value="NA-bd_OB-fold"/>
</dbReference>
<dbReference type="InterPro" id="IPR014722">
    <property type="entry name" value="Rib_uL2_dom2"/>
</dbReference>
<dbReference type="InterPro" id="IPR002171">
    <property type="entry name" value="Ribosomal_uL2"/>
</dbReference>
<dbReference type="InterPro" id="IPR005880">
    <property type="entry name" value="Ribosomal_uL2_bac/org-type"/>
</dbReference>
<dbReference type="InterPro" id="IPR022669">
    <property type="entry name" value="Ribosomal_uL2_C"/>
</dbReference>
<dbReference type="InterPro" id="IPR022671">
    <property type="entry name" value="Ribosomal_uL2_CS"/>
</dbReference>
<dbReference type="InterPro" id="IPR014726">
    <property type="entry name" value="Ribosomal_uL2_dom3"/>
</dbReference>
<dbReference type="InterPro" id="IPR022666">
    <property type="entry name" value="Ribosomal_uL2_RNA-bd_dom"/>
</dbReference>
<dbReference type="InterPro" id="IPR008991">
    <property type="entry name" value="Translation_prot_SH3-like_sf"/>
</dbReference>
<dbReference type="NCBIfam" id="TIGR01171">
    <property type="entry name" value="rplB_bact"/>
    <property type="match status" value="1"/>
</dbReference>
<dbReference type="PANTHER" id="PTHR13691:SF5">
    <property type="entry name" value="LARGE RIBOSOMAL SUBUNIT PROTEIN UL2M"/>
    <property type="match status" value="1"/>
</dbReference>
<dbReference type="PANTHER" id="PTHR13691">
    <property type="entry name" value="RIBOSOMAL PROTEIN L2"/>
    <property type="match status" value="1"/>
</dbReference>
<dbReference type="Pfam" id="PF00181">
    <property type="entry name" value="Ribosomal_L2"/>
    <property type="match status" value="1"/>
</dbReference>
<dbReference type="Pfam" id="PF03947">
    <property type="entry name" value="Ribosomal_L2_C"/>
    <property type="match status" value="1"/>
</dbReference>
<dbReference type="PIRSF" id="PIRSF002158">
    <property type="entry name" value="Ribosomal_L2"/>
    <property type="match status" value="1"/>
</dbReference>
<dbReference type="SMART" id="SM01383">
    <property type="entry name" value="Ribosomal_L2"/>
    <property type="match status" value="1"/>
</dbReference>
<dbReference type="SMART" id="SM01382">
    <property type="entry name" value="Ribosomal_L2_C"/>
    <property type="match status" value="1"/>
</dbReference>
<dbReference type="SUPFAM" id="SSF50249">
    <property type="entry name" value="Nucleic acid-binding proteins"/>
    <property type="match status" value="1"/>
</dbReference>
<dbReference type="SUPFAM" id="SSF50104">
    <property type="entry name" value="Translation proteins SH3-like domain"/>
    <property type="match status" value="1"/>
</dbReference>
<dbReference type="PROSITE" id="PS00467">
    <property type="entry name" value="RIBOSOMAL_L2"/>
    <property type="match status" value="1"/>
</dbReference>
<sequence length="278" mass="30551">MGIRKYKPTTPGRRGSSVADFVEVTRSTPEKSLVRPLHSKGGRNNAGRVTVRHQGGGHKRAYRVIDFRRHDKDGVPAKVAHIEYDPNRTARIALLHYADGEKRYILAPRNLQQGDRVENGPGADIKPGNNLALRNIPVGTTIHAIELRPGGGAKFARSAGASVQLLAKEGTMAHLRMPSGEIRLVDQRCRATVGEVGNAEQSNINWGKAGRKRWLGVRPTVRGVVMNPVDHPHGGGEGRTSGGRHPVSPWGKKEGRTRSPKKASNKYIVRRRKTNKKR</sequence>
<accession>Q9L0D7</accession>
<organism>
    <name type="scientific">Streptomyces coelicolor (strain ATCC BAA-471 / A3(2) / M145)</name>
    <dbReference type="NCBI Taxonomy" id="100226"/>
    <lineage>
        <taxon>Bacteria</taxon>
        <taxon>Bacillati</taxon>
        <taxon>Actinomycetota</taxon>
        <taxon>Actinomycetes</taxon>
        <taxon>Kitasatosporales</taxon>
        <taxon>Streptomycetaceae</taxon>
        <taxon>Streptomyces</taxon>
        <taxon>Streptomyces albidoflavus group</taxon>
    </lineage>
</organism>
<protein>
    <recommendedName>
        <fullName evidence="1">Large ribosomal subunit protein uL2</fullName>
    </recommendedName>
    <alternativeName>
        <fullName evidence="3">50S ribosomal protein L2</fullName>
    </alternativeName>
</protein>
<proteinExistence type="inferred from homology"/>